<reference key="1">
    <citation type="journal article" date="2006" name="Proc. Natl. Acad. Sci. U.S.A.">
        <title>Identification of genes subject to positive selection in uropathogenic strains of Escherichia coli: a comparative genomics approach.</title>
        <authorList>
            <person name="Chen S.L."/>
            <person name="Hung C.-S."/>
            <person name="Xu J."/>
            <person name="Reigstad C.S."/>
            <person name="Magrini V."/>
            <person name="Sabo A."/>
            <person name="Blasiar D."/>
            <person name="Bieri T."/>
            <person name="Meyer R.R."/>
            <person name="Ozersky P."/>
            <person name="Armstrong J.R."/>
            <person name="Fulton R.S."/>
            <person name="Latreille J.P."/>
            <person name="Spieth J."/>
            <person name="Hooton T.M."/>
            <person name="Mardis E.R."/>
            <person name="Hultgren S.J."/>
            <person name="Gordon J.I."/>
        </authorList>
    </citation>
    <scope>NUCLEOTIDE SEQUENCE [LARGE SCALE GENOMIC DNA]</scope>
    <source>
        <strain>UTI89 / UPEC</strain>
    </source>
</reference>
<protein>
    <recommendedName>
        <fullName>Uncharacterized protein YoeF</fullName>
    </recommendedName>
</protein>
<gene>
    <name type="primary">yoeF</name>
    <name type="ordered locus">UTI89_C2281</name>
</gene>
<feature type="chain" id="PRO_0000252218" description="Uncharacterized protein YoeF">
    <location>
        <begin position="1"/>
        <end position="118"/>
    </location>
</feature>
<sequence>MAGVRQHGWRAIPAVCSEYGADTLPDRYRSDGRCLLFRQQAGISALKQELEVKTPYRAMNHPVIGVVTKADLASMEQISLVKSWLREAGAHNVLVTSAVNNNGVTELFALLHTEEGCC</sequence>
<organism>
    <name type="scientific">Escherichia coli (strain UTI89 / UPEC)</name>
    <dbReference type="NCBI Taxonomy" id="364106"/>
    <lineage>
        <taxon>Bacteria</taxon>
        <taxon>Pseudomonadati</taxon>
        <taxon>Pseudomonadota</taxon>
        <taxon>Gammaproteobacteria</taxon>
        <taxon>Enterobacterales</taxon>
        <taxon>Enterobacteriaceae</taxon>
        <taxon>Escherichia</taxon>
    </lineage>
</organism>
<accession>Q1RA65</accession>
<name>YOEF_ECOUT</name>
<proteinExistence type="predicted"/>
<dbReference type="EMBL" id="CP000243">
    <property type="protein sequence ID" value="ABE07749.1"/>
    <property type="molecule type" value="Genomic_DNA"/>
</dbReference>
<dbReference type="KEGG" id="eci:UTI89_C2281"/>
<dbReference type="HOGENOM" id="CLU_165390_0_0_6"/>
<dbReference type="Proteomes" id="UP000001952">
    <property type="component" value="Chromosome"/>
</dbReference>
<dbReference type="GO" id="GO:0005524">
    <property type="term" value="F:ATP binding"/>
    <property type="evidence" value="ECO:0007669"/>
    <property type="project" value="InterPro"/>
</dbReference>
<dbReference type="GO" id="GO:0006576">
    <property type="term" value="P:biogenic amine metabolic process"/>
    <property type="evidence" value="ECO:0007669"/>
    <property type="project" value="InterPro"/>
</dbReference>
<dbReference type="CDD" id="cd00882">
    <property type="entry name" value="Ras_like_GTPase"/>
    <property type="match status" value="1"/>
</dbReference>
<dbReference type="Gene3D" id="3.40.50.300">
    <property type="entry name" value="P-loop containing nucleotide triphosphate hydrolases"/>
    <property type="match status" value="1"/>
</dbReference>
<dbReference type="InterPro" id="IPR012381">
    <property type="entry name" value="EutP_PduV"/>
</dbReference>
<dbReference type="InterPro" id="IPR027417">
    <property type="entry name" value="P-loop_NTPase"/>
</dbReference>
<dbReference type="PANTHER" id="PTHR40453">
    <property type="entry name" value="PROTEIN YOEF"/>
    <property type="match status" value="1"/>
</dbReference>
<dbReference type="PANTHER" id="PTHR40453:SF1">
    <property type="entry name" value="PROTEIN YOEF"/>
    <property type="match status" value="1"/>
</dbReference>
<dbReference type="Pfam" id="PF10662">
    <property type="entry name" value="PduV-EutP"/>
    <property type="match status" value="1"/>
</dbReference>
<dbReference type="SUPFAM" id="SSF52540">
    <property type="entry name" value="P-loop containing nucleoside triphosphate hydrolases"/>
    <property type="match status" value="1"/>
</dbReference>